<keyword id="KW-0520">NAD</keyword>
<keyword id="KW-0560">Oxidoreductase</keyword>
<keyword id="KW-1185">Reference proteome</keyword>
<keyword id="KW-0816">Tricarboxylic acid cycle</keyword>
<proteinExistence type="inferred from homology"/>
<evidence type="ECO:0000255" key="1">
    <source>
        <dbReference type="HAMAP-Rule" id="MF_00487"/>
    </source>
</evidence>
<reference key="1">
    <citation type="submission" date="2006-02" db="EMBL/GenBank/DDBJ databases">
        <title>Complete sequence of chromosome of Jannaschia sp. CCS1.</title>
        <authorList>
            <consortium name="US DOE Joint Genome Institute"/>
            <person name="Copeland A."/>
            <person name="Lucas S."/>
            <person name="Lapidus A."/>
            <person name="Barry K."/>
            <person name="Detter J.C."/>
            <person name="Glavina del Rio T."/>
            <person name="Hammon N."/>
            <person name="Israni S."/>
            <person name="Pitluck S."/>
            <person name="Brettin T."/>
            <person name="Bruce D."/>
            <person name="Han C."/>
            <person name="Tapia R."/>
            <person name="Gilna P."/>
            <person name="Chertkov O."/>
            <person name="Saunders E."/>
            <person name="Schmutz J."/>
            <person name="Larimer F."/>
            <person name="Land M."/>
            <person name="Kyrpides N."/>
            <person name="Lykidis A."/>
            <person name="Moran M.A."/>
            <person name="Belas R."/>
            <person name="Ye W."/>
            <person name="Buchan A."/>
            <person name="Gonzalez J.M."/>
            <person name="Schell M.A."/>
            <person name="Richardson P."/>
        </authorList>
    </citation>
    <scope>NUCLEOTIDE SEQUENCE [LARGE SCALE GENOMIC DNA]</scope>
    <source>
        <strain>CCS1</strain>
    </source>
</reference>
<sequence>MARPKIALIGAGQIGGTLAHLAALKELGDVVLFDIAEGVPQGKALDIAESGPSEKFDADMSGTNDYADIAGADVCIVTAGVARKPGMSRDDLLGINLKVMKSVGEGIRDNAPDAFVICITNPLDAMVWALREFSGLPHHKVCGMAGVLDSARFRHFLADEFNVSMKDVTAFVLGGHGDTMVPLTRYSTVAGIPLPDLIEMGWTTQEKMDAIVQRTRDGGAEIVGLLKTGSAFYAPATSAIEMAEAYLKDQKRVLPCAAYVDGALGLKGMYVGVPTVIGAGGVERVVDINMTKDEQAMFDNSVAAVNGLVEACKAIDETLS</sequence>
<accession>Q28U77</accession>
<name>MDH_JANSC</name>
<gene>
    <name evidence="1" type="primary">mdh</name>
    <name type="ordered locus">Jann_0818</name>
</gene>
<dbReference type="EC" id="1.1.1.37" evidence="1"/>
<dbReference type="EMBL" id="CP000264">
    <property type="protein sequence ID" value="ABD53735.1"/>
    <property type="molecule type" value="Genomic_DNA"/>
</dbReference>
<dbReference type="RefSeq" id="WP_011453943.1">
    <property type="nucleotide sequence ID" value="NC_007802.1"/>
</dbReference>
<dbReference type="SMR" id="Q28U77"/>
<dbReference type="STRING" id="290400.Jann_0818"/>
<dbReference type="KEGG" id="jan:Jann_0818"/>
<dbReference type="eggNOG" id="COG0039">
    <property type="taxonomic scope" value="Bacteria"/>
</dbReference>
<dbReference type="HOGENOM" id="CLU_045401_2_1_5"/>
<dbReference type="OrthoDB" id="9802969at2"/>
<dbReference type="Proteomes" id="UP000008326">
    <property type="component" value="Chromosome"/>
</dbReference>
<dbReference type="GO" id="GO:0004459">
    <property type="term" value="F:L-lactate dehydrogenase activity"/>
    <property type="evidence" value="ECO:0007669"/>
    <property type="project" value="TreeGrafter"/>
</dbReference>
<dbReference type="GO" id="GO:0030060">
    <property type="term" value="F:L-malate dehydrogenase (NAD+) activity"/>
    <property type="evidence" value="ECO:0007669"/>
    <property type="project" value="UniProtKB-UniRule"/>
</dbReference>
<dbReference type="GO" id="GO:0006089">
    <property type="term" value="P:lactate metabolic process"/>
    <property type="evidence" value="ECO:0007669"/>
    <property type="project" value="TreeGrafter"/>
</dbReference>
<dbReference type="GO" id="GO:0006099">
    <property type="term" value="P:tricarboxylic acid cycle"/>
    <property type="evidence" value="ECO:0007669"/>
    <property type="project" value="UniProtKB-UniRule"/>
</dbReference>
<dbReference type="CDD" id="cd01339">
    <property type="entry name" value="LDH-like_MDH"/>
    <property type="match status" value="1"/>
</dbReference>
<dbReference type="FunFam" id="3.40.50.720:FF:000018">
    <property type="entry name" value="Malate dehydrogenase"/>
    <property type="match status" value="1"/>
</dbReference>
<dbReference type="FunFam" id="3.90.110.10:FF:000004">
    <property type="entry name" value="Malate dehydrogenase"/>
    <property type="match status" value="1"/>
</dbReference>
<dbReference type="Gene3D" id="3.90.110.10">
    <property type="entry name" value="Lactate dehydrogenase/glycoside hydrolase, family 4, C-terminal"/>
    <property type="match status" value="1"/>
</dbReference>
<dbReference type="Gene3D" id="3.40.50.720">
    <property type="entry name" value="NAD(P)-binding Rossmann-like Domain"/>
    <property type="match status" value="1"/>
</dbReference>
<dbReference type="HAMAP" id="MF_00487">
    <property type="entry name" value="Malate_dehydrog_3"/>
    <property type="match status" value="1"/>
</dbReference>
<dbReference type="InterPro" id="IPR001557">
    <property type="entry name" value="L-lactate/malate_DH"/>
</dbReference>
<dbReference type="InterPro" id="IPR022383">
    <property type="entry name" value="Lactate/malate_DH_C"/>
</dbReference>
<dbReference type="InterPro" id="IPR001236">
    <property type="entry name" value="Lactate/malate_DH_N"/>
</dbReference>
<dbReference type="InterPro" id="IPR015955">
    <property type="entry name" value="Lactate_DH/Glyco_Ohase_4_C"/>
</dbReference>
<dbReference type="InterPro" id="IPR011275">
    <property type="entry name" value="Malate_DH_type3"/>
</dbReference>
<dbReference type="InterPro" id="IPR036291">
    <property type="entry name" value="NAD(P)-bd_dom_sf"/>
</dbReference>
<dbReference type="NCBIfam" id="TIGR01763">
    <property type="entry name" value="MalateDH_bact"/>
    <property type="match status" value="1"/>
</dbReference>
<dbReference type="NCBIfam" id="NF004863">
    <property type="entry name" value="PRK06223.1"/>
    <property type="match status" value="1"/>
</dbReference>
<dbReference type="PANTHER" id="PTHR43128">
    <property type="entry name" value="L-2-HYDROXYCARBOXYLATE DEHYDROGENASE (NAD(P)(+))"/>
    <property type="match status" value="1"/>
</dbReference>
<dbReference type="PANTHER" id="PTHR43128:SF16">
    <property type="entry name" value="L-LACTATE DEHYDROGENASE"/>
    <property type="match status" value="1"/>
</dbReference>
<dbReference type="Pfam" id="PF02866">
    <property type="entry name" value="Ldh_1_C"/>
    <property type="match status" value="1"/>
</dbReference>
<dbReference type="Pfam" id="PF00056">
    <property type="entry name" value="Ldh_1_N"/>
    <property type="match status" value="1"/>
</dbReference>
<dbReference type="PIRSF" id="PIRSF000102">
    <property type="entry name" value="Lac_mal_DH"/>
    <property type="match status" value="1"/>
</dbReference>
<dbReference type="PRINTS" id="PR00086">
    <property type="entry name" value="LLDHDRGNASE"/>
</dbReference>
<dbReference type="SUPFAM" id="SSF56327">
    <property type="entry name" value="LDH C-terminal domain-like"/>
    <property type="match status" value="1"/>
</dbReference>
<dbReference type="SUPFAM" id="SSF51735">
    <property type="entry name" value="NAD(P)-binding Rossmann-fold domains"/>
    <property type="match status" value="1"/>
</dbReference>
<protein>
    <recommendedName>
        <fullName evidence="1">Malate dehydrogenase</fullName>
        <ecNumber evidence="1">1.1.1.37</ecNumber>
    </recommendedName>
</protein>
<comment type="function">
    <text evidence="1">Catalyzes the reversible oxidation of malate to oxaloacetate.</text>
</comment>
<comment type="catalytic activity">
    <reaction evidence="1">
        <text>(S)-malate + NAD(+) = oxaloacetate + NADH + H(+)</text>
        <dbReference type="Rhea" id="RHEA:21432"/>
        <dbReference type="ChEBI" id="CHEBI:15378"/>
        <dbReference type="ChEBI" id="CHEBI:15589"/>
        <dbReference type="ChEBI" id="CHEBI:16452"/>
        <dbReference type="ChEBI" id="CHEBI:57540"/>
        <dbReference type="ChEBI" id="CHEBI:57945"/>
        <dbReference type="EC" id="1.1.1.37"/>
    </reaction>
</comment>
<comment type="similarity">
    <text evidence="1">Belongs to the LDH/MDH superfamily. MDH type 3 family.</text>
</comment>
<organism>
    <name type="scientific">Jannaschia sp. (strain CCS1)</name>
    <dbReference type="NCBI Taxonomy" id="290400"/>
    <lineage>
        <taxon>Bacteria</taxon>
        <taxon>Pseudomonadati</taxon>
        <taxon>Pseudomonadota</taxon>
        <taxon>Alphaproteobacteria</taxon>
        <taxon>Rhodobacterales</taxon>
        <taxon>Roseobacteraceae</taxon>
        <taxon>Jannaschia</taxon>
    </lineage>
</organism>
<feature type="chain" id="PRO_0000241951" description="Malate dehydrogenase">
    <location>
        <begin position="1"/>
        <end position="320"/>
    </location>
</feature>
<feature type="active site" description="Proton acceptor" evidence="1">
    <location>
        <position position="176"/>
    </location>
</feature>
<feature type="binding site" evidence="1">
    <location>
        <begin position="10"/>
        <end position="15"/>
    </location>
    <ligand>
        <name>NAD(+)</name>
        <dbReference type="ChEBI" id="CHEBI:57540"/>
    </ligand>
</feature>
<feature type="binding site" evidence="1">
    <location>
        <position position="34"/>
    </location>
    <ligand>
        <name>NAD(+)</name>
        <dbReference type="ChEBI" id="CHEBI:57540"/>
    </ligand>
</feature>
<feature type="binding site" evidence="1">
    <location>
        <position position="83"/>
    </location>
    <ligand>
        <name>substrate</name>
    </ligand>
</feature>
<feature type="binding site" evidence="1">
    <location>
        <position position="89"/>
    </location>
    <ligand>
        <name>substrate</name>
    </ligand>
</feature>
<feature type="binding site" evidence="1">
    <location>
        <position position="96"/>
    </location>
    <ligand>
        <name>NAD(+)</name>
        <dbReference type="ChEBI" id="CHEBI:57540"/>
    </ligand>
</feature>
<feature type="binding site" evidence="1">
    <location>
        <begin position="119"/>
        <end position="121"/>
    </location>
    <ligand>
        <name>NAD(+)</name>
        <dbReference type="ChEBI" id="CHEBI:57540"/>
    </ligand>
</feature>
<feature type="binding site" evidence="1">
    <location>
        <position position="121"/>
    </location>
    <ligand>
        <name>substrate</name>
    </ligand>
</feature>
<feature type="binding site" evidence="1">
    <location>
        <position position="152"/>
    </location>
    <ligand>
        <name>substrate</name>
    </ligand>
</feature>